<evidence type="ECO:0000250" key="1">
    <source>
        <dbReference type="UniProtKB" id="P46965"/>
    </source>
</evidence>
<evidence type="ECO:0000250" key="2">
    <source>
        <dbReference type="UniProtKB" id="P83362"/>
    </source>
</evidence>
<evidence type="ECO:0000250" key="3">
    <source>
        <dbReference type="UniProtKB" id="Q9Y6A9"/>
    </source>
</evidence>
<evidence type="ECO:0000255" key="4"/>
<evidence type="ECO:0000305" key="5"/>
<feature type="chain" id="PRO_0000329963" description="Signal peptidase complex subunit 1">
    <location>
        <begin position="1"/>
        <end position="80"/>
    </location>
</feature>
<feature type="topological domain" description="Cytoplasmic" evidence="2">
    <location>
        <begin position="1"/>
        <end position="9"/>
    </location>
</feature>
<feature type="transmembrane region" description="Helical" evidence="4">
    <location>
        <begin position="10"/>
        <end position="30"/>
    </location>
</feature>
<feature type="topological domain" description="Lumenal" evidence="2">
    <location>
        <begin position="31"/>
        <end position="33"/>
    </location>
</feature>
<feature type="transmembrane region" description="Helical" evidence="4">
    <location>
        <begin position="34"/>
        <end position="54"/>
    </location>
</feature>
<feature type="topological domain" description="Cytoplasmic" evidence="2">
    <location>
        <begin position="55"/>
        <end position="80"/>
    </location>
</feature>
<sequence length="80" mass="9297">MDFEGQKLAEYIYQYTIIIFGVIGWIIGFIKQDFSITFYSVALGTFLSLILCLPNWKIYCQHPLSWQKPIVQSTPTDKSK</sequence>
<keyword id="KW-0256">Endoplasmic reticulum</keyword>
<keyword id="KW-0472">Membrane</keyword>
<keyword id="KW-1185">Reference proteome</keyword>
<keyword id="KW-0812">Transmembrane</keyword>
<keyword id="KW-1133">Transmembrane helix</keyword>
<name>SPCS1_DICDI</name>
<accession>Q54Y83</accession>
<comment type="function">
    <text evidence="1 3">Component of the signal peptidase complex (SPC) which catalyzes the cleavage of N-terminal signal sequences from nascent proteins as they are translocated into the lumen of the endoplasmic reticulum (By similarity). Dispensable for SPC enzymatic activity (By similarity).</text>
</comment>
<comment type="subunit">
    <text evidence="3">Component of the signal peptidase complex (SPC) composed of a catalytic subunit sec11 and three accessory subunits spcs1, spcs2 and spcs3. The complex induces a local thinning of the ER membrane which is used to measure the length of the signal peptide (SP) h-region of protein substrates. This ensures the selectivity of the complex towards h-regions shorter than 18-20 amino acids.</text>
</comment>
<comment type="subcellular location">
    <subcellularLocation>
        <location evidence="2">Endoplasmic reticulum membrane</location>
        <topology evidence="2">Multi-pass membrane protein</topology>
    </subcellularLocation>
</comment>
<comment type="similarity">
    <text evidence="5">Belongs to the SPCS1 family.</text>
</comment>
<organism>
    <name type="scientific">Dictyostelium discoideum</name>
    <name type="common">Social amoeba</name>
    <dbReference type="NCBI Taxonomy" id="44689"/>
    <lineage>
        <taxon>Eukaryota</taxon>
        <taxon>Amoebozoa</taxon>
        <taxon>Evosea</taxon>
        <taxon>Eumycetozoa</taxon>
        <taxon>Dictyostelia</taxon>
        <taxon>Dictyosteliales</taxon>
        <taxon>Dictyosteliaceae</taxon>
        <taxon>Dictyostelium</taxon>
    </lineage>
</organism>
<gene>
    <name type="primary">spcs1</name>
    <name type="synonym">spc1</name>
    <name type="ORF">DDB_G0278371</name>
</gene>
<proteinExistence type="inferred from homology"/>
<reference key="1">
    <citation type="journal article" date="2005" name="Nature">
        <title>The genome of the social amoeba Dictyostelium discoideum.</title>
        <authorList>
            <person name="Eichinger L."/>
            <person name="Pachebat J.A."/>
            <person name="Gloeckner G."/>
            <person name="Rajandream M.A."/>
            <person name="Sucgang R."/>
            <person name="Berriman M."/>
            <person name="Song J."/>
            <person name="Olsen R."/>
            <person name="Szafranski K."/>
            <person name="Xu Q."/>
            <person name="Tunggal B."/>
            <person name="Kummerfeld S."/>
            <person name="Madera M."/>
            <person name="Konfortov B.A."/>
            <person name="Rivero F."/>
            <person name="Bankier A.T."/>
            <person name="Lehmann R."/>
            <person name="Hamlin N."/>
            <person name="Davies R."/>
            <person name="Gaudet P."/>
            <person name="Fey P."/>
            <person name="Pilcher K."/>
            <person name="Chen G."/>
            <person name="Saunders D."/>
            <person name="Sodergren E.J."/>
            <person name="Davis P."/>
            <person name="Kerhornou A."/>
            <person name="Nie X."/>
            <person name="Hall N."/>
            <person name="Anjard C."/>
            <person name="Hemphill L."/>
            <person name="Bason N."/>
            <person name="Farbrother P."/>
            <person name="Desany B."/>
            <person name="Just E."/>
            <person name="Morio T."/>
            <person name="Rost R."/>
            <person name="Churcher C.M."/>
            <person name="Cooper J."/>
            <person name="Haydock S."/>
            <person name="van Driessche N."/>
            <person name="Cronin A."/>
            <person name="Goodhead I."/>
            <person name="Muzny D.M."/>
            <person name="Mourier T."/>
            <person name="Pain A."/>
            <person name="Lu M."/>
            <person name="Harper D."/>
            <person name="Lindsay R."/>
            <person name="Hauser H."/>
            <person name="James K.D."/>
            <person name="Quiles M."/>
            <person name="Madan Babu M."/>
            <person name="Saito T."/>
            <person name="Buchrieser C."/>
            <person name="Wardroper A."/>
            <person name="Felder M."/>
            <person name="Thangavelu M."/>
            <person name="Johnson D."/>
            <person name="Knights A."/>
            <person name="Loulseged H."/>
            <person name="Mungall K.L."/>
            <person name="Oliver K."/>
            <person name="Price C."/>
            <person name="Quail M.A."/>
            <person name="Urushihara H."/>
            <person name="Hernandez J."/>
            <person name="Rabbinowitsch E."/>
            <person name="Steffen D."/>
            <person name="Sanders M."/>
            <person name="Ma J."/>
            <person name="Kohara Y."/>
            <person name="Sharp S."/>
            <person name="Simmonds M.N."/>
            <person name="Spiegler S."/>
            <person name="Tivey A."/>
            <person name="Sugano S."/>
            <person name="White B."/>
            <person name="Walker D."/>
            <person name="Woodward J.R."/>
            <person name="Winckler T."/>
            <person name="Tanaka Y."/>
            <person name="Shaulsky G."/>
            <person name="Schleicher M."/>
            <person name="Weinstock G.M."/>
            <person name="Rosenthal A."/>
            <person name="Cox E.C."/>
            <person name="Chisholm R.L."/>
            <person name="Gibbs R.A."/>
            <person name="Loomis W.F."/>
            <person name="Platzer M."/>
            <person name="Kay R.R."/>
            <person name="Williams J.G."/>
            <person name="Dear P.H."/>
            <person name="Noegel A.A."/>
            <person name="Barrell B.G."/>
            <person name="Kuspa A."/>
        </authorList>
    </citation>
    <scope>NUCLEOTIDE SEQUENCE [LARGE SCALE GENOMIC DNA]</scope>
    <source>
        <strain>AX4</strain>
    </source>
</reference>
<protein>
    <recommendedName>
        <fullName>Signal peptidase complex subunit 1</fullName>
    </recommendedName>
</protein>
<dbReference type="EMBL" id="AAFI02000023">
    <property type="protein sequence ID" value="EAL68358.1"/>
    <property type="molecule type" value="Genomic_DNA"/>
</dbReference>
<dbReference type="RefSeq" id="XP_642319.1">
    <property type="nucleotide sequence ID" value="XM_637227.1"/>
</dbReference>
<dbReference type="SMR" id="Q54Y83"/>
<dbReference type="FunCoup" id="Q54Y83">
    <property type="interactions" value="97"/>
</dbReference>
<dbReference type="STRING" id="44689.Q54Y83"/>
<dbReference type="PaxDb" id="44689-DDB0237784"/>
<dbReference type="EnsemblProtists" id="EAL68358">
    <property type="protein sequence ID" value="EAL68358"/>
    <property type="gene ID" value="DDB_G0278371"/>
</dbReference>
<dbReference type="GeneID" id="8621525"/>
<dbReference type="KEGG" id="ddi:DDB_G0278371"/>
<dbReference type="dictyBase" id="DDB_G0278371">
    <property type="gene designation" value="spc1"/>
</dbReference>
<dbReference type="VEuPathDB" id="AmoebaDB:DDB_G0278371"/>
<dbReference type="eggNOG" id="KOG4112">
    <property type="taxonomic scope" value="Eukaryota"/>
</dbReference>
<dbReference type="HOGENOM" id="CLU_134505_3_1_1"/>
<dbReference type="InParanoid" id="Q54Y83"/>
<dbReference type="OMA" id="IHLTLWT"/>
<dbReference type="PhylomeDB" id="Q54Y83"/>
<dbReference type="PRO" id="PR:Q54Y83"/>
<dbReference type="Proteomes" id="UP000002195">
    <property type="component" value="Chromosome 3"/>
</dbReference>
<dbReference type="GO" id="GO:0005787">
    <property type="term" value="C:signal peptidase complex"/>
    <property type="evidence" value="ECO:0000318"/>
    <property type="project" value="GO_Central"/>
</dbReference>
<dbReference type="GO" id="GO:0045047">
    <property type="term" value="P:protein targeting to ER"/>
    <property type="evidence" value="ECO:0000318"/>
    <property type="project" value="GO_Central"/>
</dbReference>
<dbReference type="GO" id="GO:0006465">
    <property type="term" value="P:signal peptide processing"/>
    <property type="evidence" value="ECO:0000318"/>
    <property type="project" value="GO_Central"/>
</dbReference>
<dbReference type="InterPro" id="IPR009542">
    <property type="entry name" value="Spc1/SPCS1"/>
</dbReference>
<dbReference type="PANTHER" id="PTHR13202">
    <property type="entry name" value="MICROSOMAL SIGNAL PEPTIDASE 12 KDA SUBUNIT"/>
    <property type="match status" value="1"/>
</dbReference>
<dbReference type="PANTHER" id="PTHR13202:SF0">
    <property type="entry name" value="SIGNAL PEPTIDASE COMPLEX SUBUNIT 1"/>
    <property type="match status" value="1"/>
</dbReference>
<dbReference type="Pfam" id="PF06645">
    <property type="entry name" value="SPC12"/>
    <property type="match status" value="1"/>
</dbReference>